<name>ASIP_RAT</name>
<dbReference type="EMBL" id="AB045587">
    <property type="protein sequence ID" value="BAB21564.1"/>
    <property type="molecule type" value="mRNA"/>
</dbReference>
<dbReference type="EMBL" id="AB045590">
    <property type="protein sequence ID" value="BAB21579.1"/>
    <property type="molecule type" value="Genomic_DNA"/>
</dbReference>
<dbReference type="RefSeq" id="NP_443211.1">
    <property type="nucleotide sequence ID" value="NM_052979.2"/>
</dbReference>
<dbReference type="SMR" id="Q99JA2"/>
<dbReference type="FunCoup" id="Q99JA2">
    <property type="interactions" value="4"/>
</dbReference>
<dbReference type="STRING" id="10116.ENSRNOP00000023905"/>
<dbReference type="GlyCosmos" id="Q99JA2">
    <property type="glycosylation" value="1 site, No reported glycans"/>
</dbReference>
<dbReference type="GlyGen" id="Q99JA2">
    <property type="glycosylation" value="1 site"/>
</dbReference>
<dbReference type="PhosphoSitePlus" id="Q99JA2"/>
<dbReference type="PaxDb" id="10116-ENSRNOP00000023905"/>
<dbReference type="GeneID" id="24152"/>
<dbReference type="UCSC" id="RGD:2003">
    <property type="organism name" value="rat"/>
</dbReference>
<dbReference type="AGR" id="RGD:2003"/>
<dbReference type="CTD" id="434"/>
<dbReference type="RGD" id="2003">
    <property type="gene designation" value="Asip"/>
</dbReference>
<dbReference type="eggNOG" id="ENOG502S5XF">
    <property type="taxonomic scope" value="Eukaryota"/>
</dbReference>
<dbReference type="InParanoid" id="Q99JA2"/>
<dbReference type="PhylomeDB" id="Q99JA2"/>
<dbReference type="PRO" id="PR:Q99JA2"/>
<dbReference type="Proteomes" id="UP000002494">
    <property type="component" value="Unplaced"/>
</dbReference>
<dbReference type="GO" id="GO:0005615">
    <property type="term" value="C:extracellular space"/>
    <property type="evidence" value="ECO:0000250"/>
    <property type="project" value="UniProtKB"/>
</dbReference>
<dbReference type="GO" id="GO:0031779">
    <property type="term" value="F:melanocortin receptor binding"/>
    <property type="evidence" value="ECO:0000266"/>
    <property type="project" value="RGD"/>
</dbReference>
<dbReference type="GO" id="GO:0005184">
    <property type="term" value="F:neuropeptide hormone activity"/>
    <property type="evidence" value="ECO:0000318"/>
    <property type="project" value="GO_Central"/>
</dbReference>
<dbReference type="GO" id="GO:0031781">
    <property type="term" value="F:type 3 melanocortin receptor binding"/>
    <property type="evidence" value="ECO:0000266"/>
    <property type="project" value="RGD"/>
</dbReference>
<dbReference type="GO" id="GO:0031782">
    <property type="term" value="F:type 4 melanocortin receptor binding"/>
    <property type="evidence" value="ECO:0000266"/>
    <property type="project" value="RGD"/>
</dbReference>
<dbReference type="GO" id="GO:0008343">
    <property type="term" value="P:adult feeding behavior"/>
    <property type="evidence" value="ECO:0000266"/>
    <property type="project" value="RGD"/>
</dbReference>
<dbReference type="GO" id="GO:0044725">
    <property type="term" value="P:epigenetic programming in the zygotic pronuclei"/>
    <property type="evidence" value="ECO:0000266"/>
    <property type="project" value="RGD"/>
</dbReference>
<dbReference type="GO" id="GO:0040029">
    <property type="term" value="P:epigenetic regulation of gene expression"/>
    <property type="evidence" value="ECO:0000266"/>
    <property type="project" value="RGD"/>
</dbReference>
<dbReference type="GO" id="GO:0006091">
    <property type="term" value="P:generation of precursor metabolites and energy"/>
    <property type="evidence" value="ECO:0000266"/>
    <property type="project" value="RGD"/>
</dbReference>
<dbReference type="GO" id="GO:0009755">
    <property type="term" value="P:hormone-mediated signaling pathway"/>
    <property type="evidence" value="ECO:0007669"/>
    <property type="project" value="InterPro"/>
</dbReference>
<dbReference type="GO" id="GO:0042438">
    <property type="term" value="P:melanin biosynthetic process"/>
    <property type="evidence" value="ECO:0000250"/>
    <property type="project" value="UniProtKB"/>
</dbReference>
<dbReference type="GO" id="GO:0032438">
    <property type="term" value="P:melanosome organization"/>
    <property type="evidence" value="ECO:0000266"/>
    <property type="project" value="RGD"/>
</dbReference>
<dbReference type="GO" id="GO:0032402">
    <property type="term" value="P:melanosome transport"/>
    <property type="evidence" value="ECO:0000266"/>
    <property type="project" value="RGD"/>
</dbReference>
<dbReference type="GO" id="GO:0043473">
    <property type="term" value="P:pigmentation"/>
    <property type="evidence" value="ECO:0000266"/>
    <property type="project" value="RGD"/>
</dbReference>
<dbReference type="GO" id="GO:0048023">
    <property type="term" value="P:positive regulation of melanin biosynthetic process"/>
    <property type="evidence" value="ECO:0000266"/>
    <property type="project" value="RGD"/>
</dbReference>
<dbReference type="Gene3D" id="4.10.760.10">
    <property type="entry name" value="Agouti domain"/>
    <property type="match status" value="1"/>
</dbReference>
<dbReference type="InterPro" id="IPR007733">
    <property type="entry name" value="Agouti"/>
</dbReference>
<dbReference type="InterPro" id="IPR027300">
    <property type="entry name" value="Agouti_dom"/>
</dbReference>
<dbReference type="InterPro" id="IPR036836">
    <property type="entry name" value="Agouti_dom_sf"/>
</dbReference>
<dbReference type="PANTHER" id="PTHR16551">
    <property type="entry name" value="AGOUTI RELATED"/>
    <property type="match status" value="1"/>
</dbReference>
<dbReference type="PANTHER" id="PTHR16551:SF1">
    <property type="entry name" value="AGOUTI-SIGNALING PROTEIN"/>
    <property type="match status" value="1"/>
</dbReference>
<dbReference type="Pfam" id="PF05039">
    <property type="entry name" value="Agouti"/>
    <property type="match status" value="1"/>
</dbReference>
<dbReference type="SMART" id="SM00792">
    <property type="entry name" value="Agouti"/>
    <property type="match status" value="1"/>
</dbReference>
<dbReference type="SUPFAM" id="SSF57055">
    <property type="entry name" value="Agouti-related protein"/>
    <property type="match status" value="1"/>
</dbReference>
<dbReference type="PROSITE" id="PS60024">
    <property type="entry name" value="AGOUTI_1"/>
    <property type="match status" value="1"/>
</dbReference>
<dbReference type="PROSITE" id="PS51150">
    <property type="entry name" value="AGOUTI_2"/>
    <property type="match status" value="1"/>
</dbReference>
<sequence>MDVTRLLLATLVGFLCFLTVHSHLVFEETLGDDRSLKSNSSINSLDFSSVSIVALNKKSKKISRKEAEKRKRSSKKKASIKKVARPPPPSPCVATRDSCKPPAPACCNPCASCQCRFFGSACTCRVLNPNC</sequence>
<gene>
    <name evidence="2" type="primary">Asip</name>
    <name evidence="10" type="synonym">A</name>
</gene>
<accession>Q99JA2</accession>
<evidence type="ECO:0000250" key="1"/>
<evidence type="ECO:0000250" key="2">
    <source>
        <dbReference type="UniProtKB" id="P42127"/>
    </source>
</evidence>
<evidence type="ECO:0000250" key="3">
    <source>
        <dbReference type="UniProtKB" id="Q03288"/>
    </source>
</evidence>
<evidence type="ECO:0000255" key="4"/>
<evidence type="ECO:0000255" key="5">
    <source>
        <dbReference type="PROSITE-ProRule" id="PRU00494"/>
    </source>
</evidence>
<evidence type="ECO:0000256" key="6">
    <source>
        <dbReference type="SAM" id="MobiDB-lite"/>
    </source>
</evidence>
<evidence type="ECO:0000269" key="7">
    <source>
    </source>
</evidence>
<evidence type="ECO:0000305" key="8"/>
<evidence type="ECO:0000312" key="9">
    <source>
        <dbReference type="EMBL" id="BAB21579.1"/>
    </source>
</evidence>
<evidence type="ECO:0000312" key="10">
    <source>
        <dbReference type="RGD" id="2003"/>
    </source>
</evidence>
<keyword id="KW-1015">Disulfide bond</keyword>
<keyword id="KW-0325">Glycoprotein</keyword>
<keyword id="KW-0960">Knottin</keyword>
<keyword id="KW-1185">Reference proteome</keyword>
<keyword id="KW-0964">Secreted</keyword>
<keyword id="KW-0732">Signal</keyword>
<protein>
    <recommendedName>
        <fullName>Agouti-signaling protein</fullName>
        <shortName>ASP</shortName>
    </recommendedName>
    <alternativeName>
        <fullName>Agouti switch protein</fullName>
    </alternativeName>
</protein>
<organism>
    <name type="scientific">Rattus norvegicus</name>
    <name type="common">Rat</name>
    <dbReference type="NCBI Taxonomy" id="10116"/>
    <lineage>
        <taxon>Eukaryota</taxon>
        <taxon>Metazoa</taxon>
        <taxon>Chordata</taxon>
        <taxon>Craniata</taxon>
        <taxon>Vertebrata</taxon>
        <taxon>Euteleostomi</taxon>
        <taxon>Mammalia</taxon>
        <taxon>Eutheria</taxon>
        <taxon>Euarchontoglires</taxon>
        <taxon>Glires</taxon>
        <taxon>Rodentia</taxon>
        <taxon>Myomorpha</taxon>
        <taxon>Muroidea</taxon>
        <taxon>Muridae</taxon>
        <taxon>Murinae</taxon>
        <taxon>Rattus</taxon>
    </lineage>
</organism>
<proteinExistence type="evidence at transcript level"/>
<comment type="function">
    <text evidence="7">Involved in the regulation of melanogenesis. The binding of ASP to MC1R precludes alpha-MSH initiated signaling and thus blocks production of cAMP, leading to a down-regulation of eumelanogenesis (brown/black pigment) and thus increasing synthesis of pheomelanin (yellow/red pigment).</text>
</comment>
<comment type="subcellular location">
    <subcellularLocation>
        <location evidence="3">Secreted</location>
    </subcellularLocation>
</comment>
<comment type="domain">
    <text evidence="1">The presence of a 'disulfide through disulfide knot' structurally defines this protein as a knottin.</text>
</comment>
<comment type="polymorphism">
    <text>A polymorphism exists that is responsible for the nonagouti phenotype, characterized by a plain black coat on the back and belly. This is due to a 19-bp deletion resulting in a frameshift at position 36 and a premature stop codon at position 48.</text>
</comment>
<comment type="polymorphism">
    <text evidence="7">Both strain WKAH (agouti) and strain BN (nonagouti) contain a substitution at the splice donor site of intron 3, resulting in a shorter isoform lacking exon 3 which causes reduced expression levels in strain WKAH and almost undetectable levels in strain BN.</text>
</comment>
<feature type="signal peptide" evidence="4">
    <location>
        <begin position="1"/>
        <end position="22"/>
    </location>
</feature>
<feature type="chain" id="PRO_0000001031" description="Agouti-signaling protein">
    <location>
        <begin position="23"/>
        <end position="131"/>
    </location>
</feature>
<feature type="domain" description="Agouti" evidence="5">
    <location>
        <begin position="92"/>
        <end position="131"/>
    </location>
</feature>
<feature type="region of interest" description="Disordered" evidence="6">
    <location>
        <begin position="58"/>
        <end position="96"/>
    </location>
</feature>
<feature type="compositionally biased region" description="Basic residues" evidence="6">
    <location>
        <begin position="70"/>
        <end position="84"/>
    </location>
</feature>
<feature type="glycosylation site" description="N-linked (GlcNAc...) asparagine" evidence="4">
    <location>
        <position position="39"/>
    </location>
</feature>
<feature type="disulfide bond" evidence="5">
    <location>
        <begin position="92"/>
        <end position="107"/>
    </location>
</feature>
<feature type="disulfide bond" evidence="5">
    <location>
        <begin position="99"/>
        <end position="113"/>
    </location>
</feature>
<feature type="disulfide bond" evidence="5">
    <location>
        <begin position="106"/>
        <end position="124"/>
    </location>
</feature>
<feature type="disulfide bond" evidence="5">
    <location>
        <begin position="110"/>
        <end position="131"/>
    </location>
</feature>
<feature type="disulfide bond" evidence="5">
    <location>
        <begin position="115"/>
        <end position="122"/>
    </location>
</feature>
<reference evidence="8 9" key="1">
    <citation type="journal article" date="2001" name="Mamm. Genome">
        <title>Cloning of the rat agouti gene and identification of the rat nonagouti mutation.</title>
        <authorList>
            <person name="Kuramoto T."/>
            <person name="Nomoto T."/>
            <person name="Sugimura T."/>
            <person name="Ushijima T."/>
        </authorList>
    </citation>
    <scope>NUCLEOTIDE SEQUENCE [GENOMIC DNA / MRNA]</scope>
    <scope>POLYMORPHISM</scope>
    <source>
        <strain evidence="7">ACI</strain>
        <tissue evidence="7">Skin</tissue>
    </source>
</reference>